<protein>
    <recommendedName>
        <fullName evidence="1">Elongation factor G</fullName>
        <shortName evidence="1">EF-G</shortName>
    </recommendedName>
</protein>
<comment type="function">
    <text evidence="1">Catalyzes the GTP-dependent ribosomal translocation step during translation elongation. During this step, the ribosome changes from the pre-translocational (PRE) to the post-translocational (POST) state as the newly formed A-site-bound peptidyl-tRNA and P-site-bound deacylated tRNA move to the P and E sites, respectively. Catalyzes the coordinated movement of the two tRNA molecules, the mRNA and conformational changes in the ribosome.</text>
</comment>
<comment type="subcellular location">
    <subcellularLocation>
        <location evidence="1">Cytoplasm</location>
    </subcellularLocation>
</comment>
<comment type="similarity">
    <text evidence="1">Belongs to the TRAFAC class translation factor GTPase superfamily. Classic translation factor GTPase family. EF-G/EF-2 subfamily.</text>
</comment>
<dbReference type="EMBL" id="AE005673">
    <property type="protein sequence ID" value="AAK25162.1"/>
    <property type="molecule type" value="Genomic_DNA"/>
</dbReference>
<dbReference type="PIR" id="F87645">
    <property type="entry name" value="F87645"/>
</dbReference>
<dbReference type="RefSeq" id="NP_421994.1">
    <property type="nucleotide sequence ID" value="NC_002696.2"/>
</dbReference>
<dbReference type="RefSeq" id="WP_010921035.1">
    <property type="nucleotide sequence ID" value="NC_002696.2"/>
</dbReference>
<dbReference type="SMR" id="Q9A3K4"/>
<dbReference type="STRING" id="190650.CC_3200"/>
<dbReference type="EnsemblBacteria" id="AAK25162">
    <property type="protein sequence ID" value="AAK25162"/>
    <property type="gene ID" value="CC_3200"/>
</dbReference>
<dbReference type="KEGG" id="ccr:CC_3200"/>
<dbReference type="PATRIC" id="fig|190650.5.peg.3205"/>
<dbReference type="eggNOG" id="COG0480">
    <property type="taxonomic scope" value="Bacteria"/>
</dbReference>
<dbReference type="HOGENOM" id="CLU_002794_4_1_5"/>
<dbReference type="BioCyc" id="CAULO:CC3200-MONOMER"/>
<dbReference type="Proteomes" id="UP000001816">
    <property type="component" value="Chromosome"/>
</dbReference>
<dbReference type="GO" id="GO:0005737">
    <property type="term" value="C:cytoplasm"/>
    <property type="evidence" value="ECO:0007669"/>
    <property type="project" value="UniProtKB-SubCell"/>
</dbReference>
<dbReference type="GO" id="GO:0005525">
    <property type="term" value="F:GTP binding"/>
    <property type="evidence" value="ECO:0007669"/>
    <property type="project" value="UniProtKB-UniRule"/>
</dbReference>
<dbReference type="GO" id="GO:0003924">
    <property type="term" value="F:GTPase activity"/>
    <property type="evidence" value="ECO:0007669"/>
    <property type="project" value="InterPro"/>
</dbReference>
<dbReference type="GO" id="GO:0003746">
    <property type="term" value="F:translation elongation factor activity"/>
    <property type="evidence" value="ECO:0007669"/>
    <property type="project" value="UniProtKB-UniRule"/>
</dbReference>
<dbReference type="GO" id="GO:0032790">
    <property type="term" value="P:ribosome disassembly"/>
    <property type="evidence" value="ECO:0007669"/>
    <property type="project" value="TreeGrafter"/>
</dbReference>
<dbReference type="CDD" id="cd01886">
    <property type="entry name" value="EF-G"/>
    <property type="match status" value="1"/>
</dbReference>
<dbReference type="CDD" id="cd16262">
    <property type="entry name" value="EFG_III"/>
    <property type="match status" value="1"/>
</dbReference>
<dbReference type="CDD" id="cd01434">
    <property type="entry name" value="EFG_mtEFG1_IV"/>
    <property type="match status" value="1"/>
</dbReference>
<dbReference type="CDD" id="cd03713">
    <property type="entry name" value="EFG_mtEFG_C"/>
    <property type="match status" value="1"/>
</dbReference>
<dbReference type="CDD" id="cd04088">
    <property type="entry name" value="EFG_mtEFG_II"/>
    <property type="match status" value="1"/>
</dbReference>
<dbReference type="FunFam" id="2.40.30.10:FF:000006">
    <property type="entry name" value="Elongation factor G"/>
    <property type="match status" value="1"/>
</dbReference>
<dbReference type="FunFam" id="3.30.230.10:FF:000003">
    <property type="entry name" value="Elongation factor G"/>
    <property type="match status" value="1"/>
</dbReference>
<dbReference type="FunFam" id="3.30.70.240:FF:000001">
    <property type="entry name" value="Elongation factor G"/>
    <property type="match status" value="1"/>
</dbReference>
<dbReference type="FunFam" id="3.30.70.870:FF:000001">
    <property type="entry name" value="Elongation factor G"/>
    <property type="match status" value="1"/>
</dbReference>
<dbReference type="FunFam" id="3.40.50.300:FF:000029">
    <property type="entry name" value="Elongation factor G"/>
    <property type="match status" value="1"/>
</dbReference>
<dbReference type="Gene3D" id="3.30.230.10">
    <property type="match status" value="1"/>
</dbReference>
<dbReference type="Gene3D" id="3.30.70.240">
    <property type="match status" value="1"/>
</dbReference>
<dbReference type="Gene3D" id="3.30.70.870">
    <property type="entry name" value="Elongation Factor G (Translational Gtpase), domain 3"/>
    <property type="match status" value="1"/>
</dbReference>
<dbReference type="Gene3D" id="3.40.50.300">
    <property type="entry name" value="P-loop containing nucleotide triphosphate hydrolases"/>
    <property type="match status" value="1"/>
</dbReference>
<dbReference type="Gene3D" id="2.40.30.10">
    <property type="entry name" value="Translation factors"/>
    <property type="match status" value="1"/>
</dbReference>
<dbReference type="HAMAP" id="MF_00054_B">
    <property type="entry name" value="EF_G_EF_2_B"/>
    <property type="match status" value="1"/>
</dbReference>
<dbReference type="InterPro" id="IPR053905">
    <property type="entry name" value="EF-G-like_DII"/>
</dbReference>
<dbReference type="InterPro" id="IPR041095">
    <property type="entry name" value="EFG_II"/>
</dbReference>
<dbReference type="InterPro" id="IPR009022">
    <property type="entry name" value="EFG_III"/>
</dbReference>
<dbReference type="InterPro" id="IPR035647">
    <property type="entry name" value="EFG_III/V"/>
</dbReference>
<dbReference type="InterPro" id="IPR047872">
    <property type="entry name" value="EFG_IV"/>
</dbReference>
<dbReference type="InterPro" id="IPR035649">
    <property type="entry name" value="EFG_V"/>
</dbReference>
<dbReference type="InterPro" id="IPR000640">
    <property type="entry name" value="EFG_V-like"/>
</dbReference>
<dbReference type="InterPro" id="IPR031157">
    <property type="entry name" value="G_TR_CS"/>
</dbReference>
<dbReference type="InterPro" id="IPR027417">
    <property type="entry name" value="P-loop_NTPase"/>
</dbReference>
<dbReference type="InterPro" id="IPR020568">
    <property type="entry name" value="Ribosomal_Su5_D2-typ_SF"/>
</dbReference>
<dbReference type="InterPro" id="IPR014721">
    <property type="entry name" value="Ribsml_uS5_D2-typ_fold_subgr"/>
</dbReference>
<dbReference type="InterPro" id="IPR005225">
    <property type="entry name" value="Small_GTP-bd"/>
</dbReference>
<dbReference type="InterPro" id="IPR000795">
    <property type="entry name" value="T_Tr_GTP-bd_dom"/>
</dbReference>
<dbReference type="InterPro" id="IPR009000">
    <property type="entry name" value="Transl_B-barrel_sf"/>
</dbReference>
<dbReference type="InterPro" id="IPR004540">
    <property type="entry name" value="Transl_elong_EFG/EF2"/>
</dbReference>
<dbReference type="InterPro" id="IPR005517">
    <property type="entry name" value="Transl_elong_EFG/EF2_IV"/>
</dbReference>
<dbReference type="NCBIfam" id="TIGR00484">
    <property type="entry name" value="EF-G"/>
    <property type="match status" value="1"/>
</dbReference>
<dbReference type="NCBIfam" id="NF009381">
    <property type="entry name" value="PRK12740.1-5"/>
    <property type="match status" value="1"/>
</dbReference>
<dbReference type="NCBIfam" id="TIGR00231">
    <property type="entry name" value="small_GTP"/>
    <property type="match status" value="1"/>
</dbReference>
<dbReference type="PANTHER" id="PTHR43261:SF1">
    <property type="entry name" value="RIBOSOME-RELEASING FACTOR 2, MITOCHONDRIAL"/>
    <property type="match status" value="1"/>
</dbReference>
<dbReference type="PANTHER" id="PTHR43261">
    <property type="entry name" value="TRANSLATION ELONGATION FACTOR G-RELATED"/>
    <property type="match status" value="1"/>
</dbReference>
<dbReference type="Pfam" id="PF22042">
    <property type="entry name" value="EF-G_D2"/>
    <property type="match status" value="1"/>
</dbReference>
<dbReference type="Pfam" id="PF00679">
    <property type="entry name" value="EFG_C"/>
    <property type="match status" value="1"/>
</dbReference>
<dbReference type="Pfam" id="PF14492">
    <property type="entry name" value="EFG_III"/>
    <property type="match status" value="1"/>
</dbReference>
<dbReference type="Pfam" id="PF03764">
    <property type="entry name" value="EFG_IV"/>
    <property type="match status" value="1"/>
</dbReference>
<dbReference type="Pfam" id="PF00009">
    <property type="entry name" value="GTP_EFTU"/>
    <property type="match status" value="1"/>
</dbReference>
<dbReference type="PRINTS" id="PR00315">
    <property type="entry name" value="ELONGATNFCT"/>
</dbReference>
<dbReference type="SMART" id="SM00838">
    <property type="entry name" value="EFG_C"/>
    <property type="match status" value="1"/>
</dbReference>
<dbReference type="SMART" id="SM00889">
    <property type="entry name" value="EFG_IV"/>
    <property type="match status" value="1"/>
</dbReference>
<dbReference type="SUPFAM" id="SSF54980">
    <property type="entry name" value="EF-G C-terminal domain-like"/>
    <property type="match status" value="2"/>
</dbReference>
<dbReference type="SUPFAM" id="SSF52540">
    <property type="entry name" value="P-loop containing nucleoside triphosphate hydrolases"/>
    <property type="match status" value="1"/>
</dbReference>
<dbReference type="SUPFAM" id="SSF54211">
    <property type="entry name" value="Ribosomal protein S5 domain 2-like"/>
    <property type="match status" value="1"/>
</dbReference>
<dbReference type="SUPFAM" id="SSF50447">
    <property type="entry name" value="Translation proteins"/>
    <property type="match status" value="1"/>
</dbReference>
<dbReference type="PROSITE" id="PS00301">
    <property type="entry name" value="G_TR_1"/>
    <property type="match status" value="1"/>
</dbReference>
<dbReference type="PROSITE" id="PS51722">
    <property type="entry name" value="G_TR_2"/>
    <property type="match status" value="1"/>
</dbReference>
<gene>
    <name evidence="1" type="primary">fusA</name>
    <name type="ordered locus">CC_3200</name>
</gene>
<feature type="chain" id="PRO_0000091100" description="Elongation factor G">
    <location>
        <begin position="1"/>
        <end position="692"/>
    </location>
</feature>
<feature type="domain" description="tr-type G">
    <location>
        <begin position="8"/>
        <end position="283"/>
    </location>
</feature>
<feature type="binding site" evidence="1">
    <location>
        <begin position="17"/>
        <end position="24"/>
    </location>
    <ligand>
        <name>GTP</name>
        <dbReference type="ChEBI" id="CHEBI:37565"/>
    </ligand>
</feature>
<feature type="binding site" evidence="1">
    <location>
        <begin position="81"/>
        <end position="85"/>
    </location>
    <ligand>
        <name>GTP</name>
        <dbReference type="ChEBI" id="CHEBI:37565"/>
    </ligand>
</feature>
<feature type="binding site" evidence="1">
    <location>
        <begin position="135"/>
        <end position="138"/>
    </location>
    <ligand>
        <name>GTP</name>
        <dbReference type="ChEBI" id="CHEBI:37565"/>
    </ligand>
</feature>
<reference key="1">
    <citation type="journal article" date="2001" name="Proc. Natl. Acad. Sci. U.S.A.">
        <title>Complete genome sequence of Caulobacter crescentus.</title>
        <authorList>
            <person name="Nierman W.C."/>
            <person name="Feldblyum T.V."/>
            <person name="Laub M.T."/>
            <person name="Paulsen I.T."/>
            <person name="Nelson K.E."/>
            <person name="Eisen J.A."/>
            <person name="Heidelberg J.F."/>
            <person name="Alley M.R.K."/>
            <person name="Ohta N."/>
            <person name="Maddock J.R."/>
            <person name="Potocka I."/>
            <person name="Nelson W.C."/>
            <person name="Newton A."/>
            <person name="Stephens C."/>
            <person name="Phadke N.D."/>
            <person name="Ely B."/>
            <person name="DeBoy R.T."/>
            <person name="Dodson R.J."/>
            <person name="Durkin A.S."/>
            <person name="Gwinn M.L."/>
            <person name="Haft D.H."/>
            <person name="Kolonay J.F."/>
            <person name="Smit J."/>
            <person name="Craven M.B."/>
            <person name="Khouri H.M."/>
            <person name="Shetty J."/>
            <person name="Berry K.J."/>
            <person name="Utterback T.R."/>
            <person name="Tran K."/>
            <person name="Wolf A.M."/>
            <person name="Vamathevan J.J."/>
            <person name="Ermolaeva M.D."/>
            <person name="White O."/>
            <person name="Salzberg S.L."/>
            <person name="Venter J.C."/>
            <person name="Shapiro L."/>
            <person name="Fraser C.M."/>
        </authorList>
    </citation>
    <scope>NUCLEOTIDE SEQUENCE [LARGE SCALE GENOMIC DNA]</scope>
    <source>
        <strain>ATCC 19089 / CIP 103742 / CB 15</strain>
    </source>
</reference>
<sequence>MPRTHKIEDYRNFGIMAHIDAGKTTTTERILYYTGKSHKIGEVHDGAATMDWMEQEQERGITITSAATTAFWNDKRLNIIDTPGHVDFTIEVERSLRVLDGAVTVLDGNAGVEPQTETVWRQADKYKVPRIVFVNKMDKIGADFDKSVESIRDRLGAKAVPIQFPIGSESNLKGLVDLVRMKAVVWDNDGLGASYRDEEIPADLMDKAVEARAYLVENAVELDDDAMEAYLGGEEPSIETIKKCIRKAVLTGAFYPILCGSAFKNKGVQPLLDAVVDYLPSPVDIPPTKGIDFKTEEETTRKASDEEPLSVLAFKIMDDPFVGSLTFCRIYSGKMETGMSLLNSTRDKRERVGRMLLMHSNNREDIKEAYAGDIVALAGLKETRTGDTLCDPLKSPVILERMEFPAPVIEIAVEPKSKADQEKLGVALQKLAAEDPSFTVSTDFESGQTILKGMGELHLDIKIDILKRTYKVEANIGAPQVAYRESLGRKVDIDYTHKKQTGGTGQFARVMITFEPGEPGSGFVFESAIVGGAVPKEYIPGVQKGLESVKDSGLLAGFPLIDFKATLTDGKYHDVDSSVLAFEIASRAAFKELREKGAPKLLEPIMKVEVVTPEEYLGSVIGDLNSRRGMIQGQDMRGNATVVNAYVPLANMFGYVNTLRGMSQGRAQFSMVYDHYDPVPQHVADEVIKKYA</sequence>
<organism>
    <name type="scientific">Caulobacter vibrioides (strain ATCC 19089 / CIP 103742 / CB 15)</name>
    <name type="common">Caulobacter crescentus</name>
    <dbReference type="NCBI Taxonomy" id="190650"/>
    <lineage>
        <taxon>Bacteria</taxon>
        <taxon>Pseudomonadati</taxon>
        <taxon>Pseudomonadota</taxon>
        <taxon>Alphaproteobacteria</taxon>
        <taxon>Caulobacterales</taxon>
        <taxon>Caulobacteraceae</taxon>
        <taxon>Caulobacter</taxon>
    </lineage>
</organism>
<keyword id="KW-0963">Cytoplasm</keyword>
<keyword id="KW-0251">Elongation factor</keyword>
<keyword id="KW-0342">GTP-binding</keyword>
<keyword id="KW-0547">Nucleotide-binding</keyword>
<keyword id="KW-0648">Protein biosynthesis</keyword>
<keyword id="KW-1185">Reference proteome</keyword>
<evidence type="ECO:0000255" key="1">
    <source>
        <dbReference type="HAMAP-Rule" id="MF_00054"/>
    </source>
</evidence>
<proteinExistence type="inferred from homology"/>
<name>EFG_CAUVC</name>
<accession>Q9A3K4</accession>